<organism>
    <name type="scientific">Synechococcus sp. (strain JA-3-3Ab)</name>
    <name type="common">Cyanobacteria bacterium Yellowstone A-Prime</name>
    <dbReference type="NCBI Taxonomy" id="321327"/>
    <lineage>
        <taxon>Bacteria</taxon>
        <taxon>Bacillati</taxon>
        <taxon>Cyanobacteriota</taxon>
        <taxon>Cyanophyceae</taxon>
        <taxon>Synechococcales</taxon>
        <taxon>Synechococcaceae</taxon>
        <taxon>Synechococcus</taxon>
    </lineage>
</organism>
<comment type="catalytic activity">
    <reaction evidence="1">
        <text>2-formamido-N(1)-(5-O-phospho-beta-D-ribosyl)acetamidine + ATP = 5-amino-1-(5-phospho-beta-D-ribosyl)imidazole + ADP + phosphate + H(+)</text>
        <dbReference type="Rhea" id="RHEA:23032"/>
        <dbReference type="ChEBI" id="CHEBI:15378"/>
        <dbReference type="ChEBI" id="CHEBI:30616"/>
        <dbReference type="ChEBI" id="CHEBI:43474"/>
        <dbReference type="ChEBI" id="CHEBI:137981"/>
        <dbReference type="ChEBI" id="CHEBI:147287"/>
        <dbReference type="ChEBI" id="CHEBI:456216"/>
        <dbReference type="EC" id="6.3.3.1"/>
    </reaction>
</comment>
<comment type="pathway">
    <text evidence="1">Purine metabolism; IMP biosynthesis via de novo pathway; 5-amino-1-(5-phospho-D-ribosyl)imidazole from N(2)-formyl-N(1)-(5-phospho-D-ribosyl)glycinamide: step 2/2.</text>
</comment>
<comment type="subcellular location">
    <subcellularLocation>
        <location evidence="1">Cytoplasm</location>
    </subcellularLocation>
</comment>
<comment type="similarity">
    <text evidence="1">Belongs to the AIR synthase family.</text>
</comment>
<name>PUR5_SYNJA</name>
<evidence type="ECO:0000255" key="1">
    <source>
        <dbReference type="HAMAP-Rule" id="MF_00741"/>
    </source>
</evidence>
<reference key="1">
    <citation type="journal article" date="2007" name="ISME J.">
        <title>Population level functional diversity in a microbial community revealed by comparative genomic and metagenomic analyses.</title>
        <authorList>
            <person name="Bhaya D."/>
            <person name="Grossman A.R."/>
            <person name="Steunou A.-S."/>
            <person name="Khuri N."/>
            <person name="Cohan F.M."/>
            <person name="Hamamura N."/>
            <person name="Melendrez M.C."/>
            <person name="Bateson M.M."/>
            <person name="Ward D.M."/>
            <person name="Heidelberg J.F."/>
        </authorList>
    </citation>
    <scope>NUCLEOTIDE SEQUENCE [LARGE SCALE GENOMIC DNA]</scope>
    <source>
        <strain>JA-3-3Ab</strain>
    </source>
</reference>
<proteinExistence type="inferred from homology"/>
<feature type="chain" id="PRO_1000148305" description="Phosphoribosylformylglycinamidine cyclo-ligase">
    <location>
        <begin position="1"/>
        <end position="351"/>
    </location>
</feature>
<sequence length="351" mass="37868">MDYRSAGVDIELGRAFVKGIRERVEGSQAQSSGSSGTLGGIGGFAGLLELPAGYRAPVLVAGTDGVGTKLEIAQQWGQHRGVGIDLVAMCVNDVLTVGARPLFFLDYIATGKLEPEALWQVIDGILEGCQEAGCQLLGGETAEMPGFYPPGKYDLAGFCVGIVERADVLDSSRVQLGDRLWALPSSGLHSNGFSLVRRIVAERGWPWDHQPPGWDRPLAEVFLTPTRIYVQAVQRLQAAGIPLHGMAHITGGGIPENLPRCLAPEQAARLEPHSWPIPPEFLWLQEQGQVETLEMFNTFNLGVGYVLVIPPEAENRLRSLLPEAFPIGEVVPARPGESRVLGLEEWGSLVP</sequence>
<keyword id="KW-0067">ATP-binding</keyword>
<keyword id="KW-0963">Cytoplasm</keyword>
<keyword id="KW-0436">Ligase</keyword>
<keyword id="KW-0547">Nucleotide-binding</keyword>
<keyword id="KW-0658">Purine biosynthesis</keyword>
<dbReference type="EC" id="6.3.3.1" evidence="1"/>
<dbReference type="EMBL" id="CP000239">
    <property type="protein sequence ID" value="ABD00983.1"/>
    <property type="molecule type" value="Genomic_DNA"/>
</dbReference>
<dbReference type="RefSeq" id="WP_011431653.1">
    <property type="nucleotide sequence ID" value="NC_007775.1"/>
</dbReference>
<dbReference type="SMR" id="Q2JQY9"/>
<dbReference type="STRING" id="321327.CYA_2883"/>
<dbReference type="KEGG" id="cya:CYA_2883"/>
<dbReference type="eggNOG" id="COG0150">
    <property type="taxonomic scope" value="Bacteria"/>
</dbReference>
<dbReference type="HOGENOM" id="CLU_047116_0_0_3"/>
<dbReference type="OrthoDB" id="9802507at2"/>
<dbReference type="UniPathway" id="UPA00074">
    <property type="reaction ID" value="UER00129"/>
</dbReference>
<dbReference type="Proteomes" id="UP000008818">
    <property type="component" value="Chromosome"/>
</dbReference>
<dbReference type="GO" id="GO:0005829">
    <property type="term" value="C:cytosol"/>
    <property type="evidence" value="ECO:0007669"/>
    <property type="project" value="TreeGrafter"/>
</dbReference>
<dbReference type="GO" id="GO:0005524">
    <property type="term" value="F:ATP binding"/>
    <property type="evidence" value="ECO:0007669"/>
    <property type="project" value="UniProtKB-KW"/>
</dbReference>
<dbReference type="GO" id="GO:0004637">
    <property type="term" value="F:phosphoribosylamine-glycine ligase activity"/>
    <property type="evidence" value="ECO:0007669"/>
    <property type="project" value="TreeGrafter"/>
</dbReference>
<dbReference type="GO" id="GO:0004641">
    <property type="term" value="F:phosphoribosylformylglycinamidine cyclo-ligase activity"/>
    <property type="evidence" value="ECO:0007669"/>
    <property type="project" value="UniProtKB-UniRule"/>
</dbReference>
<dbReference type="GO" id="GO:0006189">
    <property type="term" value="P:'de novo' IMP biosynthetic process"/>
    <property type="evidence" value="ECO:0007669"/>
    <property type="project" value="UniProtKB-UniRule"/>
</dbReference>
<dbReference type="GO" id="GO:0046084">
    <property type="term" value="P:adenine biosynthetic process"/>
    <property type="evidence" value="ECO:0007669"/>
    <property type="project" value="TreeGrafter"/>
</dbReference>
<dbReference type="CDD" id="cd02196">
    <property type="entry name" value="PurM"/>
    <property type="match status" value="1"/>
</dbReference>
<dbReference type="FunFam" id="3.30.1330.10:FF:000001">
    <property type="entry name" value="Phosphoribosylformylglycinamidine cyclo-ligase"/>
    <property type="match status" value="1"/>
</dbReference>
<dbReference type="FunFam" id="3.90.650.10:FF:000011">
    <property type="entry name" value="Phosphoribosylformylglycinamidine cyclo-ligase"/>
    <property type="match status" value="1"/>
</dbReference>
<dbReference type="Gene3D" id="3.90.650.10">
    <property type="entry name" value="PurM-like C-terminal domain"/>
    <property type="match status" value="1"/>
</dbReference>
<dbReference type="Gene3D" id="3.30.1330.10">
    <property type="entry name" value="PurM-like, N-terminal domain"/>
    <property type="match status" value="1"/>
</dbReference>
<dbReference type="HAMAP" id="MF_00741">
    <property type="entry name" value="AIRS"/>
    <property type="match status" value="1"/>
</dbReference>
<dbReference type="InterPro" id="IPR010918">
    <property type="entry name" value="PurM-like_C_dom"/>
</dbReference>
<dbReference type="InterPro" id="IPR036676">
    <property type="entry name" value="PurM-like_C_sf"/>
</dbReference>
<dbReference type="InterPro" id="IPR016188">
    <property type="entry name" value="PurM-like_N"/>
</dbReference>
<dbReference type="InterPro" id="IPR036921">
    <property type="entry name" value="PurM-like_N_sf"/>
</dbReference>
<dbReference type="InterPro" id="IPR004733">
    <property type="entry name" value="PurM_cligase"/>
</dbReference>
<dbReference type="NCBIfam" id="TIGR00878">
    <property type="entry name" value="purM"/>
    <property type="match status" value="1"/>
</dbReference>
<dbReference type="PANTHER" id="PTHR10520:SF12">
    <property type="entry name" value="TRIFUNCTIONAL PURINE BIOSYNTHETIC PROTEIN ADENOSINE-3"/>
    <property type="match status" value="1"/>
</dbReference>
<dbReference type="PANTHER" id="PTHR10520">
    <property type="entry name" value="TRIFUNCTIONAL PURINE BIOSYNTHETIC PROTEIN ADENOSINE-3-RELATED"/>
    <property type="match status" value="1"/>
</dbReference>
<dbReference type="Pfam" id="PF00586">
    <property type="entry name" value="AIRS"/>
    <property type="match status" value="1"/>
</dbReference>
<dbReference type="Pfam" id="PF02769">
    <property type="entry name" value="AIRS_C"/>
    <property type="match status" value="1"/>
</dbReference>
<dbReference type="SUPFAM" id="SSF56042">
    <property type="entry name" value="PurM C-terminal domain-like"/>
    <property type="match status" value="1"/>
</dbReference>
<dbReference type="SUPFAM" id="SSF55326">
    <property type="entry name" value="PurM N-terminal domain-like"/>
    <property type="match status" value="1"/>
</dbReference>
<gene>
    <name evidence="1" type="primary">purM</name>
    <name type="ordered locus">CYA_2883</name>
</gene>
<protein>
    <recommendedName>
        <fullName evidence="1">Phosphoribosylformylglycinamidine cyclo-ligase</fullName>
        <ecNumber evidence="1">6.3.3.1</ecNumber>
    </recommendedName>
    <alternativeName>
        <fullName evidence="1">AIR synthase</fullName>
    </alternativeName>
    <alternativeName>
        <fullName evidence="1">AIRS</fullName>
    </alternativeName>
    <alternativeName>
        <fullName evidence="1">Phosphoribosyl-aminoimidazole synthetase</fullName>
    </alternativeName>
</protein>
<accession>Q2JQY9</accession>